<protein>
    <recommendedName>
        <fullName>Elastase-1</fullName>
        <ecNumber>3.4.21.36</ecNumber>
    </recommendedName>
</protein>
<comment type="function">
    <text evidence="3">Acts upon elastin.</text>
</comment>
<comment type="catalytic activity">
    <reaction evidence="3">
        <text>Hydrolysis of proteins, including elastin. Preferential cleavage: Ala-|-Xaa.</text>
        <dbReference type="EC" id="3.4.21.36"/>
    </reaction>
</comment>
<comment type="cofactor">
    <cofactor evidence="2">
        <name>Ca(2+)</name>
        <dbReference type="ChEBI" id="CHEBI:29108"/>
    </cofactor>
    <text evidence="2">Binds 1 Ca(2+) ion per subunit.</text>
</comment>
<comment type="biophysicochemical properties">
    <kinetics>
        <KM evidence="3">1.47 mM for Suc-AAA-pNA (at 22 degrees Celsius)</KM>
        <KM evidence="3">1.34 mM for Suc-AAPL-pNA (at 22 degrees Celsius)</KM>
        <KM evidence="3">0.82 mM for Suc-AAPV-pNA (at 22 degrees Celsius)</KM>
        <KM evidence="3">0.83 mM for Suc-AAPA-pNA (at 22 degrees Celsius)</KM>
        <KM evidence="3">0.15 mM for Suc-AAPI-pNA (at 22 degrees Celsius)</KM>
    </kinetics>
    <phDependence>
        <text evidence="3">Optimum pH is 8.1 at 22 degrees Celsius with Suc-AAA-pNA as the substrate.</text>
    </phDependence>
</comment>
<comment type="subcellular location">
    <subcellularLocation>
        <location evidence="3">Secreted</location>
    </subcellularLocation>
</comment>
<comment type="tissue specificity">
    <text evidence="3">Pancreas.</text>
</comment>
<comment type="similarity">
    <text evidence="1">Belongs to the peptidase S1 family. Elastase subfamily.</text>
</comment>
<proteinExistence type="evidence at protein level"/>
<evidence type="ECO:0000255" key="1">
    <source>
        <dbReference type="PROSITE-ProRule" id="PRU00274"/>
    </source>
</evidence>
<evidence type="ECO:0000269" key="2">
    <source>
    </source>
</evidence>
<evidence type="ECO:0000269" key="3">
    <source>
    </source>
</evidence>
<evidence type="ECO:0000305" key="4"/>
<evidence type="ECO:0000312" key="5">
    <source>
        <dbReference type="PDB" id="1ELT"/>
    </source>
</evidence>
<evidence type="ECO:0007829" key="6">
    <source>
        <dbReference type="PDB" id="1ELT"/>
    </source>
</evidence>
<dbReference type="EC" id="3.4.21.36"/>
<dbReference type="PDB" id="1ELT">
    <property type="method" value="X-ray"/>
    <property type="resolution" value="1.61 A"/>
    <property type="chains" value="A=1-236"/>
</dbReference>
<dbReference type="PDBsum" id="1ELT"/>
<dbReference type="SMR" id="Q7SIG3"/>
<dbReference type="STRING" id="8030.ENSSSAP00000058502"/>
<dbReference type="PaxDb" id="8030-ENSSSAP00000058502"/>
<dbReference type="EvolutionaryTrace" id="Q7SIG3"/>
<dbReference type="Proteomes" id="UP000087266">
    <property type="component" value="Unplaced"/>
</dbReference>
<dbReference type="GO" id="GO:0005615">
    <property type="term" value="C:extracellular space"/>
    <property type="evidence" value="ECO:0007669"/>
    <property type="project" value="TreeGrafter"/>
</dbReference>
<dbReference type="GO" id="GO:0046872">
    <property type="term" value="F:metal ion binding"/>
    <property type="evidence" value="ECO:0007669"/>
    <property type="project" value="UniProtKB-KW"/>
</dbReference>
<dbReference type="GO" id="GO:0004252">
    <property type="term" value="F:serine-type endopeptidase activity"/>
    <property type="evidence" value="ECO:0007669"/>
    <property type="project" value="UniProtKB-EC"/>
</dbReference>
<dbReference type="GO" id="GO:0006508">
    <property type="term" value="P:proteolysis"/>
    <property type="evidence" value="ECO:0007669"/>
    <property type="project" value="UniProtKB-KW"/>
</dbReference>
<dbReference type="CDD" id="cd00190">
    <property type="entry name" value="Tryp_SPc"/>
    <property type="match status" value="1"/>
</dbReference>
<dbReference type="FunFam" id="2.40.10.10:FF:000280">
    <property type="match status" value="1"/>
</dbReference>
<dbReference type="FunFam" id="2.40.10.10:FF:000122">
    <property type="entry name" value="Chymotrypsin-like elastase family member 1"/>
    <property type="match status" value="1"/>
</dbReference>
<dbReference type="Gene3D" id="2.40.10.10">
    <property type="entry name" value="Trypsin-like serine proteases"/>
    <property type="match status" value="2"/>
</dbReference>
<dbReference type="InterPro" id="IPR050850">
    <property type="entry name" value="Peptidase_S1_Elastase_sf"/>
</dbReference>
<dbReference type="InterPro" id="IPR009003">
    <property type="entry name" value="Peptidase_S1_PA"/>
</dbReference>
<dbReference type="InterPro" id="IPR043504">
    <property type="entry name" value="Peptidase_S1_PA_chymotrypsin"/>
</dbReference>
<dbReference type="InterPro" id="IPR001314">
    <property type="entry name" value="Peptidase_S1A"/>
</dbReference>
<dbReference type="InterPro" id="IPR001254">
    <property type="entry name" value="Trypsin_dom"/>
</dbReference>
<dbReference type="InterPro" id="IPR018114">
    <property type="entry name" value="TRYPSIN_HIS"/>
</dbReference>
<dbReference type="InterPro" id="IPR033116">
    <property type="entry name" value="TRYPSIN_SER"/>
</dbReference>
<dbReference type="PANTHER" id="PTHR24257">
    <property type="entry name" value="CHYMOTRYPSIN-LIKE ELASTASE FAMILY MEMBER"/>
    <property type="match status" value="1"/>
</dbReference>
<dbReference type="PANTHER" id="PTHR24257:SF0">
    <property type="entry name" value="CHYMOTRYPSIN-LIKE ELASTASE FAMILY MEMBER 1"/>
    <property type="match status" value="1"/>
</dbReference>
<dbReference type="Pfam" id="PF00089">
    <property type="entry name" value="Trypsin"/>
    <property type="match status" value="1"/>
</dbReference>
<dbReference type="PRINTS" id="PR00722">
    <property type="entry name" value="CHYMOTRYPSIN"/>
</dbReference>
<dbReference type="SMART" id="SM00020">
    <property type="entry name" value="Tryp_SPc"/>
    <property type="match status" value="1"/>
</dbReference>
<dbReference type="SUPFAM" id="SSF50494">
    <property type="entry name" value="Trypsin-like serine proteases"/>
    <property type="match status" value="1"/>
</dbReference>
<dbReference type="PROSITE" id="PS50240">
    <property type="entry name" value="TRYPSIN_DOM"/>
    <property type="match status" value="1"/>
</dbReference>
<dbReference type="PROSITE" id="PS00134">
    <property type="entry name" value="TRYPSIN_HIS"/>
    <property type="match status" value="1"/>
</dbReference>
<dbReference type="PROSITE" id="PS00135">
    <property type="entry name" value="TRYPSIN_SER"/>
    <property type="match status" value="1"/>
</dbReference>
<accession>Q7SIG3</accession>
<feature type="chain" id="PRO_0000248261" description="Elastase-1">
    <location>
        <begin position="1"/>
        <end position="236"/>
    </location>
</feature>
<feature type="domain" description="Peptidase S1" evidence="1">
    <location>
        <begin position="1"/>
        <end position="236"/>
    </location>
</feature>
<feature type="active site" description="Charge relay system" evidence="2">
    <location>
        <position position="45"/>
    </location>
</feature>
<feature type="active site" description="Charge relay system" evidence="2">
    <location>
        <position position="93"/>
    </location>
</feature>
<feature type="active site" description="Charge relay system" evidence="2">
    <location>
        <position position="187"/>
    </location>
</feature>
<feature type="binding site" evidence="2">
    <location>
        <position position="59"/>
    </location>
    <ligand>
        <name>Ca(2+)</name>
        <dbReference type="ChEBI" id="CHEBI:29108"/>
    </ligand>
</feature>
<feature type="binding site">
    <location>
        <position position="61"/>
    </location>
    <ligand>
        <name>Ca(2+)</name>
        <dbReference type="ChEBI" id="CHEBI:29108"/>
    </ligand>
</feature>
<feature type="binding site">
    <location>
        <position position="64"/>
    </location>
    <ligand>
        <name>Ca(2+)</name>
        <dbReference type="ChEBI" id="CHEBI:29108"/>
    </ligand>
</feature>
<feature type="binding site" evidence="2">
    <location>
        <position position="66"/>
    </location>
    <ligand>
        <name>Ca(2+)</name>
        <dbReference type="ChEBI" id="CHEBI:29108"/>
    </ligand>
</feature>
<feature type="binding site" evidence="2">
    <location>
        <position position="69"/>
    </location>
    <ligand>
        <name>Ca(2+)</name>
        <dbReference type="ChEBI" id="CHEBI:29108"/>
    </ligand>
</feature>
<feature type="disulfide bond" evidence="1 2">
    <location>
        <begin position="30"/>
        <end position="46"/>
    </location>
</feature>
<feature type="disulfide bond" evidence="1 2">
    <location>
        <begin position="127"/>
        <end position="193"/>
    </location>
</feature>
<feature type="disulfide bond" evidence="1 2">
    <location>
        <begin position="158"/>
        <end position="174"/>
    </location>
</feature>
<feature type="disulfide bond" evidence="1 2">
    <location>
        <begin position="183"/>
        <end position="213"/>
    </location>
</feature>
<feature type="strand" evidence="6">
    <location>
        <begin position="2"/>
        <end position="6"/>
    </location>
</feature>
<feature type="strand" evidence="6">
    <location>
        <begin position="15"/>
        <end position="22"/>
    </location>
</feature>
<feature type="strand" evidence="6">
    <location>
        <begin position="25"/>
        <end position="36"/>
    </location>
</feature>
<feature type="strand" evidence="6">
    <location>
        <begin position="39"/>
        <end position="42"/>
    </location>
</feature>
<feature type="helix" evidence="6">
    <location>
        <begin position="44"/>
        <end position="47"/>
    </location>
</feature>
<feature type="strand" evidence="6">
    <location>
        <begin position="53"/>
        <end position="58"/>
    </location>
</feature>
<feature type="strand" evidence="6">
    <location>
        <begin position="70"/>
        <end position="72"/>
    </location>
</feature>
<feature type="strand" evidence="6">
    <location>
        <begin position="74"/>
        <end position="79"/>
    </location>
</feature>
<feature type="helix" evidence="6">
    <location>
        <begin position="88"/>
        <end position="90"/>
    </location>
</feature>
<feature type="strand" evidence="6">
    <location>
        <begin position="95"/>
        <end position="101"/>
    </location>
</feature>
<feature type="strand" evidence="6">
    <location>
        <begin position="106"/>
        <end position="108"/>
    </location>
</feature>
<feature type="strand" evidence="6">
    <location>
        <begin position="127"/>
        <end position="132"/>
    </location>
</feature>
<feature type="strand" evidence="6">
    <location>
        <begin position="146"/>
        <end position="149"/>
    </location>
</feature>
<feature type="helix" evidence="6">
    <location>
        <begin position="155"/>
        <end position="158"/>
    </location>
</feature>
<feature type="turn" evidence="6">
    <location>
        <begin position="161"/>
        <end position="164"/>
    </location>
</feature>
<feature type="helix" evidence="6">
    <location>
        <begin position="165"/>
        <end position="167"/>
    </location>
</feature>
<feature type="strand" evidence="6">
    <location>
        <begin position="172"/>
        <end position="175"/>
    </location>
</feature>
<feature type="strand" evidence="6">
    <location>
        <begin position="190"/>
        <end position="195"/>
    </location>
</feature>
<feature type="strand" evidence="6">
    <location>
        <begin position="198"/>
        <end position="207"/>
    </location>
</feature>
<feature type="strand" evidence="6">
    <location>
        <begin position="220"/>
        <end position="224"/>
    </location>
</feature>
<feature type="helix" evidence="6">
    <location>
        <begin position="225"/>
        <end position="228"/>
    </location>
</feature>
<feature type="helix" evidence="6">
    <location>
        <begin position="229"/>
        <end position="235"/>
    </location>
</feature>
<organism>
    <name type="scientific">Salmo salar</name>
    <name type="common">Atlantic salmon</name>
    <dbReference type="NCBI Taxonomy" id="8030"/>
    <lineage>
        <taxon>Eukaryota</taxon>
        <taxon>Metazoa</taxon>
        <taxon>Chordata</taxon>
        <taxon>Craniata</taxon>
        <taxon>Vertebrata</taxon>
        <taxon>Euteleostomi</taxon>
        <taxon>Actinopterygii</taxon>
        <taxon>Neopterygii</taxon>
        <taxon>Teleostei</taxon>
        <taxon>Protacanthopterygii</taxon>
        <taxon>Salmoniformes</taxon>
        <taxon>Salmonidae</taxon>
        <taxon>Salmoninae</taxon>
        <taxon>Salmo</taxon>
    </lineage>
</organism>
<name>ELA1_SALSA</name>
<keyword id="KW-0002">3D-structure</keyword>
<keyword id="KW-0106">Calcium</keyword>
<keyword id="KW-1015">Disulfide bond</keyword>
<keyword id="KW-0378">Hydrolase</keyword>
<keyword id="KW-0479">Metal-binding</keyword>
<keyword id="KW-0645">Protease</keyword>
<keyword id="KW-1185">Reference proteome</keyword>
<keyword id="KW-0964">Secreted</keyword>
<keyword id="KW-0720">Serine protease</keyword>
<sequence length="236" mass="25015">VVGGRVAQPNSWPWQISLQYKSGSSYYHTCGGSLIRQGWVMTAAHCVDSARTWRVVLGEHNLNTNEGKEQIMTVNSVFIHSGWNSDDVAGGYDIALLRLNTQASLNSAVQLAALPPSNQILPNNNPCYITGWGKTSTGGPLSDSLKQAWLPSVDHATCSSSGWWGSTVKTTMVCAGGGANSGCNGDSGGPLNCQVNGSYYVHGVTSFVSSSGCNASKKPTVFTRVSAYISWMNGIM</sequence>
<reference evidence="4 5" key="1">
    <citation type="journal article" date="1998" name="Mol. Mar. Biol. Biotechnol.">
        <title>Purification and characterization of pancreatic elastase from North Atlantic salmon (Salmo salar).</title>
        <authorList>
            <person name="Berglund G.I."/>
            <person name="Smalaas A.O."/>
            <person name="Outzen H."/>
            <person name="Willassen N.P."/>
        </authorList>
    </citation>
    <scope>FUNCTION</scope>
    <scope>CATALYTIC ACTIVITY</scope>
    <scope>BIOPHYSICOCHEMICAL PROPERTIES</scope>
    <scope>SUBCELLULAR LOCATION</scope>
    <scope>TISSUE SPECIFICITY</scope>
</reference>
<reference evidence="4" key="2">
    <citation type="journal article" date="1995" name="Acta Crystallogr. D">
        <title>Crystallization and preliminary X-ray crystallographic studies of native elastase from North Atlantic salmon (Salmo salar).</title>
        <authorList>
            <person name="Berglund G.I."/>
            <person name="Smalaas A.O."/>
            <person name="Hansen L.K."/>
            <person name="Willassen N.P."/>
        </authorList>
    </citation>
    <scope>CRYSTALLIZATION</scope>
    <scope>X-RAY CRYSTALLOGRAPHY (1.6 ANGSTROMS)</scope>
</reference>
<reference evidence="4" key="3">
    <citation type="journal article" date="1995" name="Acta Crystallogr. D">
        <title>Structure of native pancreatic elastase from North Atlantic salmon at 1.61 A resolution.</title>
        <authorList>
            <person name="Berglund G.I."/>
            <person name="Willassen N.P."/>
            <person name="Hordvik A."/>
            <person name="Smalaas A.O."/>
        </authorList>
    </citation>
    <scope>X-RAY CRYSTALLOGRAPHY (1.61 ANGSTROMS)</scope>
    <scope>COFACTOR</scope>
    <scope>DISULFIDE BONDS</scope>
</reference>